<reference key="1">
    <citation type="journal article" date="2000" name="Nature">
        <title>The genome sequence of the plant pathogen Xylella fastidiosa.</title>
        <authorList>
            <person name="Simpson A.J.G."/>
            <person name="Reinach F.C."/>
            <person name="Arruda P."/>
            <person name="Abreu F.A."/>
            <person name="Acencio M."/>
            <person name="Alvarenga R."/>
            <person name="Alves L.M.C."/>
            <person name="Araya J.E."/>
            <person name="Baia G.S."/>
            <person name="Baptista C.S."/>
            <person name="Barros M.H."/>
            <person name="Bonaccorsi E.D."/>
            <person name="Bordin S."/>
            <person name="Bove J.M."/>
            <person name="Briones M.R.S."/>
            <person name="Bueno M.R.P."/>
            <person name="Camargo A.A."/>
            <person name="Camargo L.E.A."/>
            <person name="Carraro D.M."/>
            <person name="Carrer H."/>
            <person name="Colauto N.B."/>
            <person name="Colombo C."/>
            <person name="Costa F.F."/>
            <person name="Costa M.C.R."/>
            <person name="Costa-Neto C.M."/>
            <person name="Coutinho L.L."/>
            <person name="Cristofani M."/>
            <person name="Dias-Neto E."/>
            <person name="Docena C."/>
            <person name="El-Dorry H."/>
            <person name="Facincani A.P."/>
            <person name="Ferreira A.J.S."/>
            <person name="Ferreira V.C.A."/>
            <person name="Ferro J.A."/>
            <person name="Fraga J.S."/>
            <person name="Franca S.C."/>
            <person name="Franco M.C."/>
            <person name="Frohme M."/>
            <person name="Furlan L.R."/>
            <person name="Garnier M."/>
            <person name="Goldman G.H."/>
            <person name="Goldman M.H.S."/>
            <person name="Gomes S.L."/>
            <person name="Gruber A."/>
            <person name="Ho P.L."/>
            <person name="Hoheisel J.D."/>
            <person name="Junqueira M.L."/>
            <person name="Kemper E.L."/>
            <person name="Kitajima J.P."/>
            <person name="Krieger J.E."/>
            <person name="Kuramae E.E."/>
            <person name="Laigret F."/>
            <person name="Lambais M.R."/>
            <person name="Leite L.C.C."/>
            <person name="Lemos E.G.M."/>
            <person name="Lemos M.V.F."/>
            <person name="Lopes S.A."/>
            <person name="Lopes C.R."/>
            <person name="Machado J.A."/>
            <person name="Machado M.A."/>
            <person name="Madeira A.M.B.N."/>
            <person name="Madeira H.M.F."/>
            <person name="Marino C.L."/>
            <person name="Marques M.V."/>
            <person name="Martins E.A.L."/>
            <person name="Martins E.M.F."/>
            <person name="Matsukuma A.Y."/>
            <person name="Menck C.F.M."/>
            <person name="Miracca E.C."/>
            <person name="Miyaki C.Y."/>
            <person name="Monteiro-Vitorello C.B."/>
            <person name="Moon D.H."/>
            <person name="Nagai M.A."/>
            <person name="Nascimento A.L.T.O."/>
            <person name="Netto L.E.S."/>
            <person name="Nhani A. Jr."/>
            <person name="Nobrega F.G."/>
            <person name="Nunes L.R."/>
            <person name="Oliveira M.A."/>
            <person name="de Oliveira M.C."/>
            <person name="de Oliveira R.C."/>
            <person name="Palmieri D.A."/>
            <person name="Paris A."/>
            <person name="Peixoto B.R."/>
            <person name="Pereira G.A.G."/>
            <person name="Pereira H.A. Jr."/>
            <person name="Pesquero J.B."/>
            <person name="Quaggio R.B."/>
            <person name="Roberto P.G."/>
            <person name="Rodrigues V."/>
            <person name="de Rosa A.J.M."/>
            <person name="de Rosa V.E. Jr."/>
            <person name="de Sa R.G."/>
            <person name="Santelli R.V."/>
            <person name="Sawasaki H.E."/>
            <person name="da Silva A.C.R."/>
            <person name="da Silva A.M."/>
            <person name="da Silva F.R."/>
            <person name="Silva W.A. Jr."/>
            <person name="da Silveira J.F."/>
            <person name="Silvestri M.L.Z."/>
            <person name="Siqueira W.J."/>
            <person name="de Souza A.A."/>
            <person name="de Souza A.P."/>
            <person name="Terenzi M.F."/>
            <person name="Truffi D."/>
            <person name="Tsai S.M."/>
            <person name="Tsuhako M.H."/>
            <person name="Vallada H."/>
            <person name="Van Sluys M.A."/>
            <person name="Verjovski-Almeida S."/>
            <person name="Vettore A.L."/>
            <person name="Zago M.A."/>
            <person name="Zatz M."/>
            <person name="Meidanis J."/>
            <person name="Setubal J.C."/>
        </authorList>
    </citation>
    <scope>NUCLEOTIDE SEQUENCE [LARGE SCALE GENOMIC DNA]</scope>
    <source>
        <strain>9a5c</strain>
    </source>
</reference>
<feature type="chain" id="PRO_0000180773" description="Glucose-6-phosphate isomerase">
    <location>
        <begin position="1"/>
        <end position="502"/>
    </location>
</feature>
<feature type="active site" description="Proton donor" evidence="1">
    <location>
        <position position="331"/>
    </location>
</feature>
<feature type="active site" evidence="1">
    <location>
        <position position="362"/>
    </location>
</feature>
<feature type="active site" evidence="1">
    <location>
        <position position="471"/>
    </location>
</feature>
<comment type="function">
    <text evidence="1">Catalyzes the reversible isomerization of glucose-6-phosphate to fructose-6-phosphate.</text>
</comment>
<comment type="catalytic activity">
    <reaction evidence="1">
        <text>alpha-D-glucose 6-phosphate = beta-D-fructose 6-phosphate</text>
        <dbReference type="Rhea" id="RHEA:11816"/>
        <dbReference type="ChEBI" id="CHEBI:57634"/>
        <dbReference type="ChEBI" id="CHEBI:58225"/>
        <dbReference type="EC" id="5.3.1.9"/>
    </reaction>
</comment>
<comment type="pathway">
    <text evidence="1">Carbohydrate biosynthesis; gluconeogenesis.</text>
</comment>
<comment type="pathway">
    <text evidence="1">Carbohydrate degradation; glycolysis; D-glyceraldehyde 3-phosphate and glycerone phosphate from D-glucose: step 2/4.</text>
</comment>
<comment type="subcellular location">
    <subcellularLocation>
        <location evidence="1">Cytoplasm</location>
    </subcellularLocation>
</comment>
<comment type="similarity">
    <text evidence="1 2">Belongs to the GPI family.</text>
</comment>
<protein>
    <recommendedName>
        <fullName evidence="1">Glucose-6-phosphate isomerase</fullName>
        <shortName evidence="1">GPI</shortName>
        <ecNumber evidence="1">5.3.1.9</ecNumber>
    </recommendedName>
    <alternativeName>
        <fullName evidence="1">Phosphoglucose isomerase</fullName>
        <shortName evidence="1">PGI</shortName>
    </alternativeName>
    <alternativeName>
        <fullName evidence="1">Phosphohexose isomerase</fullName>
        <shortName evidence="1">PHI</shortName>
    </alternativeName>
</protein>
<accession>Q9PGR6</accession>
<sequence length="502" mass="54754">MHNGFDALQLHANRLRGVTIPDLLAAELKRPEQYARQVGPLYFNFARQKYDCVALEALFALARNHNVAGAFQRMFCGEQVNVTEGRAVLHTALRGDLSGTSVAVAAYTAAAKVRERMYALIAGLDASEVTDIISVGIGGSDLGPRLVVDALRPISQGRFRVHFVSNVDGAAMRRTLDMLDPSRTAGILISKTFGTQETLLNGRILYDWLGGSERLYAVSANPERAAHAFDIVPTQVLPIWDWVGGRYSLWSAVGFPIALAIGSQRFEELLAGAAEFDAYALRVPLEENVAVLHGLTAVWNRNFLGCATYAVMAYDQRLALLPAYLQQLVMESLGKRVKCDGTPVDRDTVPVWWGGVGTDVQHSFFQALHQGTNIVPADFIGTIRNDDPYTENHFALNANLLAQIEVLANGQLSDDPHRVYPGGNPSTLILLDALTPQALGGLIAMYEHSVYVQSVIWGINAFDQFGVELGKHLAVQLLPALKGESVEVVDPVTRAVLVRLRG</sequence>
<evidence type="ECO:0000255" key="1">
    <source>
        <dbReference type="HAMAP-Rule" id="MF_00473"/>
    </source>
</evidence>
<evidence type="ECO:0000305" key="2"/>
<name>G6PI_XYLFA</name>
<proteinExistence type="inferred from homology"/>
<gene>
    <name evidence="1" type="primary">pgi</name>
    <name type="ordered locus">XF_0232</name>
</gene>
<dbReference type="EC" id="5.3.1.9" evidence="1"/>
<dbReference type="EMBL" id="AE003849">
    <property type="protein sequence ID" value="AAF83045.1"/>
    <property type="molecule type" value="Genomic_DNA"/>
</dbReference>
<dbReference type="PIR" id="H82832">
    <property type="entry name" value="H82832"/>
</dbReference>
<dbReference type="RefSeq" id="WP_010892773.1">
    <property type="nucleotide sequence ID" value="NC_002488.3"/>
</dbReference>
<dbReference type="SMR" id="Q9PGR6"/>
<dbReference type="STRING" id="160492.XF_0232"/>
<dbReference type="KEGG" id="xfa:XF_0232"/>
<dbReference type="eggNOG" id="COG0166">
    <property type="taxonomic scope" value="Bacteria"/>
</dbReference>
<dbReference type="HOGENOM" id="CLU_017947_3_1_6"/>
<dbReference type="UniPathway" id="UPA00109">
    <property type="reaction ID" value="UER00181"/>
</dbReference>
<dbReference type="UniPathway" id="UPA00138"/>
<dbReference type="Proteomes" id="UP000000812">
    <property type="component" value="Chromosome"/>
</dbReference>
<dbReference type="GO" id="GO:0005829">
    <property type="term" value="C:cytosol"/>
    <property type="evidence" value="ECO:0007669"/>
    <property type="project" value="TreeGrafter"/>
</dbReference>
<dbReference type="GO" id="GO:0097367">
    <property type="term" value="F:carbohydrate derivative binding"/>
    <property type="evidence" value="ECO:0007669"/>
    <property type="project" value="InterPro"/>
</dbReference>
<dbReference type="GO" id="GO:0004347">
    <property type="term" value="F:glucose-6-phosphate isomerase activity"/>
    <property type="evidence" value="ECO:0007669"/>
    <property type="project" value="UniProtKB-UniRule"/>
</dbReference>
<dbReference type="GO" id="GO:0048029">
    <property type="term" value="F:monosaccharide binding"/>
    <property type="evidence" value="ECO:0007669"/>
    <property type="project" value="TreeGrafter"/>
</dbReference>
<dbReference type="GO" id="GO:0006094">
    <property type="term" value="P:gluconeogenesis"/>
    <property type="evidence" value="ECO:0007669"/>
    <property type="project" value="UniProtKB-UniRule"/>
</dbReference>
<dbReference type="GO" id="GO:0051156">
    <property type="term" value="P:glucose 6-phosphate metabolic process"/>
    <property type="evidence" value="ECO:0007669"/>
    <property type="project" value="TreeGrafter"/>
</dbReference>
<dbReference type="GO" id="GO:0006096">
    <property type="term" value="P:glycolytic process"/>
    <property type="evidence" value="ECO:0007669"/>
    <property type="project" value="UniProtKB-UniRule"/>
</dbReference>
<dbReference type="CDD" id="cd05015">
    <property type="entry name" value="SIS_PGI_1"/>
    <property type="match status" value="1"/>
</dbReference>
<dbReference type="CDD" id="cd05016">
    <property type="entry name" value="SIS_PGI_2"/>
    <property type="match status" value="1"/>
</dbReference>
<dbReference type="Gene3D" id="1.10.1390.10">
    <property type="match status" value="1"/>
</dbReference>
<dbReference type="Gene3D" id="3.40.50.10490">
    <property type="entry name" value="Glucose-6-phosphate isomerase like protein, domain 1"/>
    <property type="match status" value="2"/>
</dbReference>
<dbReference type="HAMAP" id="MF_00473">
    <property type="entry name" value="G6P_isomerase"/>
    <property type="match status" value="1"/>
</dbReference>
<dbReference type="InterPro" id="IPR001672">
    <property type="entry name" value="G6P_Isomerase"/>
</dbReference>
<dbReference type="InterPro" id="IPR023096">
    <property type="entry name" value="G6P_Isomerase_C"/>
</dbReference>
<dbReference type="InterPro" id="IPR018189">
    <property type="entry name" value="Phosphoglucose_isomerase_CS"/>
</dbReference>
<dbReference type="InterPro" id="IPR046348">
    <property type="entry name" value="SIS_dom_sf"/>
</dbReference>
<dbReference type="InterPro" id="IPR035476">
    <property type="entry name" value="SIS_PGI_1"/>
</dbReference>
<dbReference type="InterPro" id="IPR035482">
    <property type="entry name" value="SIS_PGI_2"/>
</dbReference>
<dbReference type="NCBIfam" id="NF001211">
    <property type="entry name" value="PRK00179.1"/>
    <property type="match status" value="1"/>
</dbReference>
<dbReference type="PANTHER" id="PTHR11469">
    <property type="entry name" value="GLUCOSE-6-PHOSPHATE ISOMERASE"/>
    <property type="match status" value="1"/>
</dbReference>
<dbReference type="PANTHER" id="PTHR11469:SF1">
    <property type="entry name" value="GLUCOSE-6-PHOSPHATE ISOMERASE"/>
    <property type="match status" value="1"/>
</dbReference>
<dbReference type="Pfam" id="PF00342">
    <property type="entry name" value="PGI"/>
    <property type="match status" value="1"/>
</dbReference>
<dbReference type="PRINTS" id="PR00662">
    <property type="entry name" value="G6PISOMERASE"/>
</dbReference>
<dbReference type="SUPFAM" id="SSF53697">
    <property type="entry name" value="SIS domain"/>
    <property type="match status" value="1"/>
</dbReference>
<dbReference type="PROSITE" id="PS00765">
    <property type="entry name" value="P_GLUCOSE_ISOMERASE_1"/>
    <property type="match status" value="1"/>
</dbReference>
<dbReference type="PROSITE" id="PS00174">
    <property type="entry name" value="P_GLUCOSE_ISOMERASE_2"/>
    <property type="match status" value="1"/>
</dbReference>
<dbReference type="PROSITE" id="PS51463">
    <property type="entry name" value="P_GLUCOSE_ISOMERASE_3"/>
    <property type="match status" value="1"/>
</dbReference>
<organism>
    <name type="scientific">Xylella fastidiosa (strain 9a5c)</name>
    <dbReference type="NCBI Taxonomy" id="160492"/>
    <lineage>
        <taxon>Bacteria</taxon>
        <taxon>Pseudomonadati</taxon>
        <taxon>Pseudomonadota</taxon>
        <taxon>Gammaproteobacteria</taxon>
        <taxon>Lysobacterales</taxon>
        <taxon>Lysobacteraceae</taxon>
        <taxon>Xylella</taxon>
    </lineage>
</organism>
<keyword id="KW-0963">Cytoplasm</keyword>
<keyword id="KW-0312">Gluconeogenesis</keyword>
<keyword id="KW-0324">Glycolysis</keyword>
<keyword id="KW-0413">Isomerase</keyword>